<evidence type="ECO:0000250" key="1"/>
<evidence type="ECO:0000250" key="2">
    <source>
        <dbReference type="UniProtKB" id="P06241"/>
    </source>
</evidence>
<evidence type="ECO:0000255" key="3">
    <source>
        <dbReference type="PROSITE-ProRule" id="PRU00159"/>
    </source>
</evidence>
<evidence type="ECO:0000255" key="4">
    <source>
        <dbReference type="PROSITE-ProRule" id="PRU00191"/>
    </source>
</evidence>
<evidence type="ECO:0000255" key="5">
    <source>
        <dbReference type="PROSITE-ProRule" id="PRU00192"/>
    </source>
</evidence>
<evidence type="ECO:0000255" key="6">
    <source>
        <dbReference type="PROSITE-ProRule" id="PRU10028"/>
    </source>
</evidence>
<evidence type="ECO:0000305" key="7"/>
<proteinExistence type="evidence at transcript level"/>
<reference key="1">
    <citation type="journal article" date="2013" name="Nature">
        <title>The zebrafish reference genome sequence and its relationship to the human genome.</title>
        <authorList>
            <person name="Howe K."/>
            <person name="Clark M.D."/>
            <person name="Torroja C.F."/>
            <person name="Torrance J."/>
            <person name="Berthelot C."/>
            <person name="Muffato M."/>
            <person name="Collins J.E."/>
            <person name="Humphray S."/>
            <person name="McLaren K."/>
            <person name="Matthews L."/>
            <person name="McLaren S."/>
            <person name="Sealy I."/>
            <person name="Caccamo M."/>
            <person name="Churcher C."/>
            <person name="Scott C."/>
            <person name="Barrett J.C."/>
            <person name="Koch R."/>
            <person name="Rauch G.J."/>
            <person name="White S."/>
            <person name="Chow W."/>
            <person name="Kilian B."/>
            <person name="Quintais L.T."/>
            <person name="Guerra-Assuncao J.A."/>
            <person name="Zhou Y."/>
            <person name="Gu Y."/>
            <person name="Yen J."/>
            <person name="Vogel J.H."/>
            <person name="Eyre T."/>
            <person name="Redmond S."/>
            <person name="Banerjee R."/>
            <person name="Chi J."/>
            <person name="Fu B."/>
            <person name="Langley E."/>
            <person name="Maguire S.F."/>
            <person name="Laird G.K."/>
            <person name="Lloyd D."/>
            <person name="Kenyon E."/>
            <person name="Donaldson S."/>
            <person name="Sehra H."/>
            <person name="Almeida-King J."/>
            <person name="Loveland J."/>
            <person name="Trevanion S."/>
            <person name="Jones M."/>
            <person name="Quail M."/>
            <person name="Willey D."/>
            <person name="Hunt A."/>
            <person name="Burton J."/>
            <person name="Sims S."/>
            <person name="McLay K."/>
            <person name="Plumb B."/>
            <person name="Davis J."/>
            <person name="Clee C."/>
            <person name="Oliver K."/>
            <person name="Clark R."/>
            <person name="Riddle C."/>
            <person name="Elliot D."/>
            <person name="Threadgold G."/>
            <person name="Harden G."/>
            <person name="Ware D."/>
            <person name="Begum S."/>
            <person name="Mortimore B."/>
            <person name="Kerry G."/>
            <person name="Heath P."/>
            <person name="Phillimore B."/>
            <person name="Tracey A."/>
            <person name="Corby N."/>
            <person name="Dunn M."/>
            <person name="Johnson C."/>
            <person name="Wood J."/>
            <person name="Clark S."/>
            <person name="Pelan S."/>
            <person name="Griffiths G."/>
            <person name="Smith M."/>
            <person name="Glithero R."/>
            <person name="Howden P."/>
            <person name="Barker N."/>
            <person name="Lloyd C."/>
            <person name="Stevens C."/>
            <person name="Harley J."/>
            <person name="Holt K."/>
            <person name="Panagiotidis G."/>
            <person name="Lovell J."/>
            <person name="Beasley H."/>
            <person name="Henderson C."/>
            <person name="Gordon D."/>
            <person name="Auger K."/>
            <person name="Wright D."/>
            <person name="Collins J."/>
            <person name="Raisen C."/>
            <person name="Dyer L."/>
            <person name="Leung K."/>
            <person name="Robertson L."/>
            <person name="Ambridge K."/>
            <person name="Leongamornlert D."/>
            <person name="McGuire S."/>
            <person name="Gilderthorp R."/>
            <person name="Griffiths C."/>
            <person name="Manthravadi D."/>
            <person name="Nichol S."/>
            <person name="Barker G."/>
            <person name="Whitehead S."/>
            <person name="Kay M."/>
            <person name="Brown J."/>
            <person name="Murnane C."/>
            <person name="Gray E."/>
            <person name="Humphries M."/>
            <person name="Sycamore N."/>
            <person name="Barker D."/>
            <person name="Saunders D."/>
            <person name="Wallis J."/>
            <person name="Babbage A."/>
            <person name="Hammond S."/>
            <person name="Mashreghi-Mohammadi M."/>
            <person name="Barr L."/>
            <person name="Martin S."/>
            <person name="Wray P."/>
            <person name="Ellington A."/>
            <person name="Matthews N."/>
            <person name="Ellwood M."/>
            <person name="Woodmansey R."/>
            <person name="Clark G."/>
            <person name="Cooper J."/>
            <person name="Tromans A."/>
            <person name="Grafham D."/>
            <person name="Skuce C."/>
            <person name="Pandian R."/>
            <person name="Andrews R."/>
            <person name="Harrison E."/>
            <person name="Kimberley A."/>
            <person name="Garnett J."/>
            <person name="Fosker N."/>
            <person name="Hall R."/>
            <person name="Garner P."/>
            <person name="Kelly D."/>
            <person name="Bird C."/>
            <person name="Palmer S."/>
            <person name="Gehring I."/>
            <person name="Berger A."/>
            <person name="Dooley C.M."/>
            <person name="Ersan-Urun Z."/>
            <person name="Eser C."/>
            <person name="Geiger H."/>
            <person name="Geisler M."/>
            <person name="Karotki L."/>
            <person name="Kirn A."/>
            <person name="Konantz J."/>
            <person name="Konantz M."/>
            <person name="Oberlander M."/>
            <person name="Rudolph-Geiger S."/>
            <person name="Teucke M."/>
            <person name="Lanz C."/>
            <person name="Raddatz G."/>
            <person name="Osoegawa K."/>
            <person name="Zhu B."/>
            <person name="Rapp A."/>
            <person name="Widaa S."/>
            <person name="Langford C."/>
            <person name="Yang F."/>
            <person name="Schuster S.C."/>
            <person name="Carter N.P."/>
            <person name="Harrow J."/>
            <person name="Ning Z."/>
            <person name="Herrero J."/>
            <person name="Searle S.M."/>
            <person name="Enright A."/>
            <person name="Geisler R."/>
            <person name="Plasterk R.H."/>
            <person name="Lee C."/>
            <person name="Westerfield M."/>
            <person name="de Jong P.J."/>
            <person name="Zon L.I."/>
            <person name="Postlethwait J.H."/>
            <person name="Nusslein-Volhard C."/>
            <person name="Hubbard T.J."/>
            <person name="Roest Crollius H."/>
            <person name="Rogers J."/>
            <person name="Stemple D.L."/>
        </authorList>
    </citation>
    <scope>NUCLEOTIDE SEQUENCE [LARGE SCALE GENOMIC DNA]</scope>
    <source>
        <strain>Tuebingen</strain>
    </source>
</reference>
<reference key="2">
    <citation type="submission" date="2005-07" db="EMBL/GenBank/DDBJ databases">
        <authorList>
            <consortium name="NIH - Zebrafish Gene Collection (ZGC) project"/>
        </authorList>
    </citation>
    <scope>NUCLEOTIDE SEQUENCE [LARGE SCALE MRNA]</scope>
    <source>
        <tissue>Eye</tissue>
    </source>
</reference>
<accession>F1RDG9</accession>
<accession>Q4KMJ8</accession>
<protein>
    <recommendedName>
        <fullName>Tyrosine-protein kinase fynb</fullName>
        <ecNumber>2.7.10.2</ecNumber>
    </recommendedName>
    <alternativeName>
        <fullName>Proto-oncogene c-Fynb</fullName>
    </alternativeName>
</protein>
<dbReference type="EC" id="2.7.10.2"/>
<dbReference type="EMBL" id="AL954744">
    <property type="status" value="NOT_ANNOTATED_CDS"/>
    <property type="molecule type" value="Genomic_DNA"/>
</dbReference>
<dbReference type="EMBL" id="FP015917">
    <property type="status" value="NOT_ANNOTATED_CDS"/>
    <property type="molecule type" value="Genomic_DNA"/>
</dbReference>
<dbReference type="EMBL" id="BC098534">
    <property type="protein sequence ID" value="AAH98534.1"/>
    <property type="molecule type" value="mRNA"/>
</dbReference>
<dbReference type="RefSeq" id="NP_001025140.1">
    <property type="nucleotide sequence ID" value="NM_001029969.1"/>
</dbReference>
<dbReference type="RefSeq" id="XP_005160359.1">
    <property type="nucleotide sequence ID" value="XM_005160302.5"/>
</dbReference>
<dbReference type="SMR" id="F1RDG9"/>
<dbReference type="FunCoup" id="F1RDG9">
    <property type="interactions" value="447"/>
</dbReference>
<dbReference type="STRING" id="7955.ENSDARP00000037198"/>
<dbReference type="PaxDb" id="7955-ENSDARP00000037198"/>
<dbReference type="Ensembl" id="ENSDART00000036635">
    <property type="protein sequence ID" value="ENSDARP00000037198"/>
    <property type="gene ID" value="ENSDARG00000025319"/>
</dbReference>
<dbReference type="Ensembl" id="ENSDART00000169407">
    <property type="protein sequence ID" value="ENSDARP00000133954"/>
    <property type="gene ID" value="ENSDARG00000025319"/>
</dbReference>
<dbReference type="GeneID" id="574422"/>
<dbReference type="KEGG" id="dre:574422"/>
<dbReference type="AGR" id="ZFIN:ZDB-GENE-050706-89"/>
<dbReference type="CTD" id="574422"/>
<dbReference type="ZFIN" id="ZDB-GENE-050706-89">
    <property type="gene designation" value="fynb"/>
</dbReference>
<dbReference type="eggNOG" id="KOG0197">
    <property type="taxonomic scope" value="Eukaryota"/>
</dbReference>
<dbReference type="InParanoid" id="F1RDG9"/>
<dbReference type="OMA" id="APVDSMK"/>
<dbReference type="OrthoDB" id="4062651at2759"/>
<dbReference type="PhylomeDB" id="F1RDG9"/>
<dbReference type="TreeFam" id="TF351634"/>
<dbReference type="Reactome" id="R-DRE-1227986">
    <property type="pathway name" value="Signaling by ERBB2"/>
</dbReference>
<dbReference type="Reactome" id="R-DRE-1433557">
    <property type="pathway name" value="Signaling by SCF-KIT"/>
</dbReference>
<dbReference type="Reactome" id="R-DRE-1433559">
    <property type="pathway name" value="Regulation of KIT signaling"/>
</dbReference>
<dbReference type="Reactome" id="R-DRE-373753">
    <property type="pathway name" value="Nephrin family interactions"/>
</dbReference>
<dbReference type="Reactome" id="R-DRE-3928663">
    <property type="pathway name" value="EPHA-mediated growth cone collapse"/>
</dbReference>
<dbReference type="Reactome" id="R-DRE-3928664">
    <property type="pathway name" value="Ephrin signaling"/>
</dbReference>
<dbReference type="Reactome" id="R-DRE-3928665">
    <property type="pathway name" value="EPH-ephrin mediated repulsion of cells"/>
</dbReference>
<dbReference type="Reactome" id="R-DRE-399954">
    <property type="pathway name" value="Sema3A PAK dependent Axon repulsion"/>
</dbReference>
<dbReference type="Reactome" id="R-DRE-399956">
    <property type="pathway name" value="CRMPs in Sema3A signaling"/>
</dbReference>
<dbReference type="Reactome" id="R-DRE-418885">
    <property type="pathway name" value="DCC mediated attractive signaling"/>
</dbReference>
<dbReference type="Reactome" id="R-DRE-4420097">
    <property type="pathway name" value="VEGFA-VEGFR2 Pathway"/>
</dbReference>
<dbReference type="Reactome" id="R-DRE-5621480">
    <property type="pathway name" value="Dectin-2 family"/>
</dbReference>
<dbReference type="Reactome" id="R-DRE-912631">
    <property type="pathway name" value="Regulation of signaling by CBL"/>
</dbReference>
<dbReference type="PRO" id="PR:F1RDG9"/>
<dbReference type="Proteomes" id="UP000000437">
    <property type="component" value="Chromosome 20"/>
</dbReference>
<dbReference type="Bgee" id="ENSDARG00000025319">
    <property type="expression patterns" value="Expressed in retina and 20 other cell types or tissues"/>
</dbReference>
<dbReference type="GO" id="GO:0005737">
    <property type="term" value="C:cytoplasm"/>
    <property type="evidence" value="ECO:0007669"/>
    <property type="project" value="UniProtKB-SubCell"/>
</dbReference>
<dbReference type="GO" id="GO:0005886">
    <property type="term" value="C:plasma membrane"/>
    <property type="evidence" value="ECO:0000318"/>
    <property type="project" value="GO_Central"/>
</dbReference>
<dbReference type="GO" id="GO:0005524">
    <property type="term" value="F:ATP binding"/>
    <property type="evidence" value="ECO:0007669"/>
    <property type="project" value="UniProtKB-KW"/>
</dbReference>
<dbReference type="GO" id="GO:0046872">
    <property type="term" value="F:metal ion binding"/>
    <property type="evidence" value="ECO:0007669"/>
    <property type="project" value="UniProtKB-KW"/>
</dbReference>
<dbReference type="GO" id="GO:0004715">
    <property type="term" value="F:non-membrane spanning protein tyrosine kinase activity"/>
    <property type="evidence" value="ECO:0000318"/>
    <property type="project" value="GO_Central"/>
</dbReference>
<dbReference type="GO" id="GO:0005102">
    <property type="term" value="F:signaling receptor binding"/>
    <property type="evidence" value="ECO:0000318"/>
    <property type="project" value="GO_Central"/>
</dbReference>
<dbReference type="GO" id="GO:0030154">
    <property type="term" value="P:cell differentiation"/>
    <property type="evidence" value="ECO:0000318"/>
    <property type="project" value="GO_Central"/>
</dbReference>
<dbReference type="GO" id="GO:0007169">
    <property type="term" value="P:cell surface receptor protein tyrosine kinase signaling pathway"/>
    <property type="evidence" value="ECO:0000318"/>
    <property type="project" value="GO_Central"/>
</dbReference>
<dbReference type="GO" id="GO:0060027">
    <property type="term" value="P:convergent extension involved in gastrulation"/>
    <property type="evidence" value="ECO:0000316"/>
    <property type="project" value="ZFIN"/>
</dbReference>
<dbReference type="GO" id="GO:0031101">
    <property type="term" value="P:fin regeneration"/>
    <property type="evidence" value="ECO:0000315"/>
    <property type="project" value="ZFIN"/>
</dbReference>
<dbReference type="GO" id="GO:0050852">
    <property type="term" value="P:T cell receptor signaling pathway"/>
    <property type="evidence" value="ECO:0000318"/>
    <property type="project" value="GO_Central"/>
</dbReference>
<dbReference type="CDD" id="cd10418">
    <property type="entry name" value="SH2_Src_Fyn_isoform_a_like"/>
    <property type="match status" value="1"/>
</dbReference>
<dbReference type="CDD" id="cd12006">
    <property type="entry name" value="SH3_Fyn_Yrk"/>
    <property type="match status" value="1"/>
</dbReference>
<dbReference type="FunFam" id="1.10.510.10:FF:000553">
    <property type="entry name" value="Tyrosine-protein kinase"/>
    <property type="match status" value="1"/>
</dbReference>
<dbReference type="FunFam" id="3.30.200.20:FF:000016">
    <property type="entry name" value="Tyrosine-protein kinase"/>
    <property type="match status" value="1"/>
</dbReference>
<dbReference type="FunFam" id="2.30.30.40:FF:000182">
    <property type="entry name" value="Tyrosine-protein kinase Fyn"/>
    <property type="match status" value="1"/>
</dbReference>
<dbReference type="FunFam" id="3.30.505.10:FF:000120">
    <property type="entry name" value="Tyrosine-protein kinase Fyn"/>
    <property type="match status" value="1"/>
</dbReference>
<dbReference type="Gene3D" id="3.30.200.20">
    <property type="entry name" value="Phosphorylase Kinase, domain 1"/>
    <property type="match status" value="1"/>
</dbReference>
<dbReference type="Gene3D" id="3.30.505.10">
    <property type="entry name" value="SH2 domain"/>
    <property type="match status" value="1"/>
</dbReference>
<dbReference type="Gene3D" id="2.30.30.40">
    <property type="entry name" value="SH3 Domains"/>
    <property type="match status" value="1"/>
</dbReference>
<dbReference type="Gene3D" id="1.10.510.10">
    <property type="entry name" value="Transferase(Phosphotransferase) domain 1"/>
    <property type="match status" value="1"/>
</dbReference>
<dbReference type="InterPro" id="IPR047924">
    <property type="entry name" value="Fyn/Yrk_SH2"/>
</dbReference>
<dbReference type="InterPro" id="IPR035750">
    <property type="entry name" value="Fyn/Yrk_SH3"/>
</dbReference>
<dbReference type="InterPro" id="IPR011009">
    <property type="entry name" value="Kinase-like_dom_sf"/>
</dbReference>
<dbReference type="InterPro" id="IPR050198">
    <property type="entry name" value="Non-receptor_tyrosine_kinases"/>
</dbReference>
<dbReference type="InterPro" id="IPR000719">
    <property type="entry name" value="Prot_kinase_dom"/>
</dbReference>
<dbReference type="InterPro" id="IPR017441">
    <property type="entry name" value="Protein_kinase_ATP_BS"/>
</dbReference>
<dbReference type="InterPro" id="IPR001245">
    <property type="entry name" value="Ser-Thr/Tyr_kinase_cat_dom"/>
</dbReference>
<dbReference type="InterPro" id="IPR000980">
    <property type="entry name" value="SH2"/>
</dbReference>
<dbReference type="InterPro" id="IPR036860">
    <property type="entry name" value="SH2_dom_sf"/>
</dbReference>
<dbReference type="InterPro" id="IPR036028">
    <property type="entry name" value="SH3-like_dom_sf"/>
</dbReference>
<dbReference type="InterPro" id="IPR001452">
    <property type="entry name" value="SH3_domain"/>
</dbReference>
<dbReference type="InterPro" id="IPR008266">
    <property type="entry name" value="Tyr_kinase_AS"/>
</dbReference>
<dbReference type="InterPro" id="IPR020635">
    <property type="entry name" value="Tyr_kinase_cat_dom"/>
</dbReference>
<dbReference type="PANTHER" id="PTHR24418">
    <property type="entry name" value="TYROSINE-PROTEIN KINASE"/>
    <property type="match status" value="1"/>
</dbReference>
<dbReference type="Pfam" id="PF07714">
    <property type="entry name" value="PK_Tyr_Ser-Thr"/>
    <property type="match status" value="1"/>
</dbReference>
<dbReference type="Pfam" id="PF00017">
    <property type="entry name" value="SH2"/>
    <property type="match status" value="1"/>
</dbReference>
<dbReference type="Pfam" id="PF00018">
    <property type="entry name" value="SH3_1"/>
    <property type="match status" value="1"/>
</dbReference>
<dbReference type="PRINTS" id="PR00401">
    <property type="entry name" value="SH2DOMAIN"/>
</dbReference>
<dbReference type="PRINTS" id="PR00452">
    <property type="entry name" value="SH3DOMAIN"/>
</dbReference>
<dbReference type="PRINTS" id="PR00109">
    <property type="entry name" value="TYRKINASE"/>
</dbReference>
<dbReference type="SMART" id="SM00252">
    <property type="entry name" value="SH2"/>
    <property type="match status" value="1"/>
</dbReference>
<dbReference type="SMART" id="SM00326">
    <property type="entry name" value="SH3"/>
    <property type="match status" value="1"/>
</dbReference>
<dbReference type="SMART" id="SM00219">
    <property type="entry name" value="TyrKc"/>
    <property type="match status" value="1"/>
</dbReference>
<dbReference type="SUPFAM" id="SSF56112">
    <property type="entry name" value="Protein kinase-like (PK-like)"/>
    <property type="match status" value="1"/>
</dbReference>
<dbReference type="SUPFAM" id="SSF55550">
    <property type="entry name" value="SH2 domain"/>
    <property type="match status" value="1"/>
</dbReference>
<dbReference type="SUPFAM" id="SSF50044">
    <property type="entry name" value="SH3-domain"/>
    <property type="match status" value="1"/>
</dbReference>
<dbReference type="PROSITE" id="PS00107">
    <property type="entry name" value="PROTEIN_KINASE_ATP"/>
    <property type="match status" value="1"/>
</dbReference>
<dbReference type="PROSITE" id="PS50011">
    <property type="entry name" value="PROTEIN_KINASE_DOM"/>
    <property type="match status" value="1"/>
</dbReference>
<dbReference type="PROSITE" id="PS00109">
    <property type="entry name" value="PROTEIN_KINASE_TYR"/>
    <property type="match status" value="1"/>
</dbReference>
<dbReference type="PROSITE" id="PS50001">
    <property type="entry name" value="SH2"/>
    <property type="match status" value="1"/>
</dbReference>
<dbReference type="PROSITE" id="PS50002">
    <property type="entry name" value="SH3"/>
    <property type="match status" value="1"/>
</dbReference>
<keyword id="KW-0067">ATP-binding</keyword>
<keyword id="KW-0963">Cytoplasm</keyword>
<keyword id="KW-0217">Developmental protein</keyword>
<keyword id="KW-0418">Kinase</keyword>
<keyword id="KW-0449">Lipoprotein</keyword>
<keyword id="KW-0464">Manganese</keyword>
<keyword id="KW-0479">Metal-binding</keyword>
<keyword id="KW-0519">Myristate</keyword>
<keyword id="KW-0547">Nucleotide-binding</keyword>
<keyword id="KW-0564">Palmitate</keyword>
<keyword id="KW-0597">Phosphoprotein</keyword>
<keyword id="KW-0656">Proto-oncogene</keyword>
<keyword id="KW-1185">Reference proteome</keyword>
<keyword id="KW-0727">SH2 domain</keyword>
<keyword id="KW-0728">SH3 domain</keyword>
<keyword id="KW-0808">Transferase</keyword>
<keyword id="KW-0829">Tyrosine-protein kinase</keyword>
<organism>
    <name type="scientific">Danio rerio</name>
    <name type="common">Zebrafish</name>
    <name type="synonym">Brachydanio rerio</name>
    <dbReference type="NCBI Taxonomy" id="7955"/>
    <lineage>
        <taxon>Eukaryota</taxon>
        <taxon>Metazoa</taxon>
        <taxon>Chordata</taxon>
        <taxon>Craniata</taxon>
        <taxon>Vertebrata</taxon>
        <taxon>Euteleostomi</taxon>
        <taxon>Actinopterygii</taxon>
        <taxon>Neopterygii</taxon>
        <taxon>Teleostei</taxon>
        <taxon>Ostariophysi</taxon>
        <taxon>Cypriniformes</taxon>
        <taxon>Danionidae</taxon>
        <taxon>Danioninae</taxon>
        <taxon>Danio</taxon>
    </lineage>
</organism>
<gene>
    <name type="primary">fynb</name>
</gene>
<sequence>MGCVQCKDKEAAKLTDDRDTSLSQSGVGYRYGVDPTPQHYPAFSGTGTAVAAIPNYNNFHGAAVSQGMTVFGGISTSTHQGTLRTRGGTGVTLFVALYDYEARTEDDLSFRKGEKFQIINSTEGDWWDARSLTTGGTGYIPSNYVAPVDSIQAEDWYFGKLGRKDAERQLLSTGNPRGTFLIRESETTKGAFSLSIRDWDDVKGDHVKHYKIRKLDSGGYYITTRAQFETLQQLVQHYTERAAGLCCRLVVPCHKGMPRLTDLSVKTKDVWEIPRESLQLIKRLGNGQFGEVWMGTWNGNTKVAIKTLKPGTMSPESFLEEAQIMKKLRHDKLVQLYAVVSEEPIYIVTEYMGKGSLLDFLKDGEGRALKLPNLVDMAAQVAGGMAYIERMNYIHRDLRSANILVGDSLVCKIADFGLARLIEDNEYTARQGAKFPIKWTAPEAALYGKFTIKSDVWSFGILLTELVTKGRVPYPGMNNREVLEQVERGYRMQCPQDCPSSLHELMVQCWKKDAEERPTFEYLQAFLEDYFTATEPQYQPGDNL</sequence>
<feature type="initiator methionine" description="Removed" evidence="1">
    <location>
        <position position="1"/>
    </location>
</feature>
<feature type="chain" id="PRO_0000418879" description="Tyrosine-protein kinase fynb">
    <location>
        <begin position="2"/>
        <end position="544"/>
    </location>
</feature>
<feature type="domain" description="SH3" evidence="5">
    <location>
        <begin position="89"/>
        <end position="150"/>
    </location>
</feature>
<feature type="domain" description="SH2" evidence="4">
    <location>
        <begin position="156"/>
        <end position="253"/>
    </location>
</feature>
<feature type="domain" description="Protein kinase" evidence="3">
    <location>
        <begin position="278"/>
        <end position="531"/>
    </location>
</feature>
<feature type="active site" description="Proton acceptor" evidence="3 6">
    <location>
        <position position="397"/>
    </location>
</feature>
<feature type="binding site" evidence="3">
    <location>
        <begin position="284"/>
        <end position="292"/>
    </location>
    <ligand>
        <name>ATP</name>
        <dbReference type="ChEBI" id="CHEBI:30616"/>
    </ligand>
</feature>
<feature type="binding site" evidence="3">
    <location>
        <position position="306"/>
    </location>
    <ligand>
        <name>ATP</name>
        <dbReference type="ChEBI" id="CHEBI:30616"/>
    </ligand>
</feature>
<feature type="modified residue" description="Phosphotyrosine; by autocatalysis" evidence="1">
    <location>
        <position position="427"/>
    </location>
</feature>
<feature type="modified residue" description="Phosphotyrosine" evidence="1">
    <location>
        <position position="538"/>
    </location>
</feature>
<feature type="lipid moiety-binding region" description="N-myristoyl glycine" evidence="1">
    <location>
        <position position="2"/>
    </location>
</feature>
<feature type="lipid moiety-binding region" description="S-palmitoyl cysteine" evidence="1">
    <location>
        <position position="3"/>
    </location>
</feature>
<feature type="lipid moiety-binding region" description="S-palmitoyl cysteine" evidence="1">
    <location>
        <position position="6"/>
    </location>
</feature>
<feature type="sequence conflict" description="In Ref. 2; AAH98534." evidence="7" ref="2">
    <original>S</original>
    <variation>P</variation>
    <location>
        <position position="65"/>
    </location>
</feature>
<comment type="function">
    <text evidence="2">Tyrosine-protein kinase implicated in the control of cell growth. Plays a role in the regulation of intracellular calcium levels. Required in brain development and mature brain function with important roles in the regulation of axon growth, axon guidance, and neurite extension. Role in CNTN1-mediated signaling (By similarity).</text>
</comment>
<comment type="catalytic activity">
    <reaction evidence="6">
        <text>L-tyrosyl-[protein] + ATP = O-phospho-L-tyrosyl-[protein] + ADP + H(+)</text>
        <dbReference type="Rhea" id="RHEA:10596"/>
        <dbReference type="Rhea" id="RHEA-COMP:10136"/>
        <dbReference type="Rhea" id="RHEA-COMP:20101"/>
        <dbReference type="ChEBI" id="CHEBI:15378"/>
        <dbReference type="ChEBI" id="CHEBI:30616"/>
        <dbReference type="ChEBI" id="CHEBI:46858"/>
        <dbReference type="ChEBI" id="CHEBI:61978"/>
        <dbReference type="ChEBI" id="CHEBI:456216"/>
        <dbReference type="EC" id="2.7.10.2"/>
    </reaction>
</comment>
<comment type="cofactor">
    <cofactor evidence="1">
        <name>Mn(2+)</name>
        <dbReference type="ChEBI" id="CHEBI:29035"/>
    </cofactor>
</comment>
<comment type="activity regulation">
    <text evidence="2">Inhibited by phosphorylation of Tyr-538 by leukocyte common antigen and activated by dephosphorylation of this site.</text>
</comment>
<comment type="subcellular location">
    <subcellularLocation>
        <location evidence="1">Cytoplasm</location>
    </subcellularLocation>
</comment>
<comment type="similarity">
    <text evidence="3">Belongs to the protein kinase superfamily. Tyr protein kinase family. SRC subfamily.</text>
</comment>
<name>FYNB_DANRE</name>